<feature type="chain" id="PRO_0000058620" description="14-3-3 protein epsilon">
    <location>
        <begin position="1"/>
        <end position="255"/>
    </location>
</feature>
<feature type="region of interest" description="Disordered" evidence="5">
    <location>
        <begin position="234"/>
        <end position="255"/>
    </location>
</feature>
<feature type="site" description="Interaction with phosphoserine on interacting protein" evidence="1">
    <location>
        <position position="57"/>
    </location>
</feature>
<feature type="site" description="Interaction with phosphoserine on interacting protein" evidence="1">
    <location>
        <position position="130"/>
    </location>
</feature>
<feature type="modified residue" description="N-acetylmethionine" evidence="9">
    <location>
        <position position="1"/>
    </location>
</feature>
<feature type="modified residue" description="N6-acetyllysine; alternate" evidence="2">
    <location>
        <position position="50"/>
    </location>
</feature>
<feature type="modified residue" description="Phosphoserine" evidence="11">
    <location>
        <position position="65"/>
    </location>
</feature>
<feature type="modified residue" description="N6-acetyllysine" evidence="2">
    <location>
        <position position="69"/>
    </location>
</feature>
<feature type="modified residue" description="N6-acetyllysine" evidence="2">
    <location>
        <position position="118"/>
    </location>
</feature>
<feature type="modified residue" description="N6-acetyllysine" evidence="2">
    <location>
        <position position="123"/>
    </location>
</feature>
<feature type="modified residue" description="Phosphotyrosine" evidence="11">
    <location>
        <position position="131"/>
    </location>
</feature>
<feature type="modified residue" description="Phosphothreonine" evidence="11">
    <location>
        <position position="137"/>
    </location>
</feature>
<feature type="modified residue" description="Phosphoserine" evidence="11">
    <location>
        <position position="210"/>
    </location>
</feature>
<feature type="modified residue" description="Phosphothreonine" evidence="2">
    <location>
        <position position="232"/>
    </location>
</feature>
<feature type="cross-link" description="Glycyl lysine isopeptide (Lys-Gly) (interchain with G-Cter in SUMO2); alternate" evidence="2">
    <location>
        <position position="50"/>
    </location>
</feature>
<feature type="sequence conflict" description="In Ref. 3; AAC52676." evidence="10" ref="3">
    <original>K</original>
    <variation>T</variation>
    <location>
        <position position="73"/>
    </location>
</feature>
<feature type="sequence conflict" description="In Ref. 3; AAC52676." evidence="10" ref="3">
    <original>F</original>
    <variation>S</variation>
    <location>
        <position position="120"/>
    </location>
</feature>
<feature type="sequence conflict" description="In Ref. 3; AAC52676." evidence="10" ref="3">
    <original>K</original>
    <variation>Y</variation>
    <location>
        <position position="123"/>
    </location>
</feature>
<sequence>MDDREDLVYQAKLAEQAERYDEMVESMKKVAGMDVELTVEERNLLSVAYKNVIGARRASWRIISSIEQKEENKGGEDKLKMIREYRQMVETELKLICCDILDVLDKHLIPAANTGESKVFYYKMKGDYHRYLAEFATGNDRKEAAENSLVAYKAASDIAMTELPPTHPIRLGLALNFSVFYYEILNSPDRACRLAKAAFDDAIAELDTLSEESYKDSTLIMQLLRDNLTLWTSDMQGDGEEQNKEALQDVEDENQ</sequence>
<proteinExistence type="evidence at protein level"/>
<organism>
    <name type="scientific">Rattus norvegicus</name>
    <name type="common">Rat</name>
    <dbReference type="NCBI Taxonomy" id="10116"/>
    <lineage>
        <taxon>Eukaryota</taxon>
        <taxon>Metazoa</taxon>
        <taxon>Chordata</taxon>
        <taxon>Craniata</taxon>
        <taxon>Vertebrata</taxon>
        <taxon>Euteleostomi</taxon>
        <taxon>Mammalia</taxon>
        <taxon>Eutheria</taxon>
        <taxon>Euarchontoglires</taxon>
        <taxon>Glires</taxon>
        <taxon>Rodentia</taxon>
        <taxon>Myomorpha</taxon>
        <taxon>Muroidea</taxon>
        <taxon>Muridae</taxon>
        <taxon>Murinae</taxon>
        <taxon>Rattus</taxon>
    </lineage>
</organism>
<comment type="function">
    <text evidence="2 4">Adapter protein implicated in the regulation of a large spectrum of both general and specialized signaling pathways. Binds to a large number of partners, usually by recognition of a phosphoserine or phosphothreonine motif. Binding generally results in the modulation of the activity of the binding partner. Positively regulates phosphorylated protein HSF1 nuclear export to the cytoplasm.</text>
</comment>
<comment type="subunit">
    <text evidence="2 3 6 7">Homodimer (By similarity). Heterodimerizes with YWHAZ (By similarity). Interacts with PKA-phosphorylated AANAT (PubMed:11427721). Interacts with ABL1 (phosphorylated form); the interaction retains it in the cytoplasm (By similarity). Interacts with ARHGEF28 (By similarity). Interacts with BEX3 (By similarity). Weakly interacts with CDKN1B (By similarity). Interacts with the 'Thr-369' phosphorylated form of DAPK2 (By similarity). Interacts with DENND1A (By similarity). Interacts with GAB2 (By similarity). Interacts with phosphorylated GRB10 (By similarity). Interacts with KSR1 (By similarity). Interacts with NDEL1 (By similarity). Interacts with PI4KB, TBC1D22A and TBC1D22B (By similarity). Interacts with the phosphorylated (by AKT1) form of SRPK2 (By similarity). Interacts with TIAM2 (By similarity). Interacts with the 'Ser-1134' and 'Ser-1161' phosphorylated form of SOS1 (PubMed:22827337). Interacts with ZFP36 (via phosphorylated form) (By similarity). Interacts with SLITRK1 (By similarity). Interacts with HSF1 (via phosphorylated form); this interaction promotes HSF1 sequestration in the cytoplasm in a ERK-dependent manner (By similarity). Interacts with RIPOR2 (By similarity). Interacts with KLHL22; required for the nuclear localization of KLHL22 upon amino acid starvation (By similarity). Interacts with CRTC1 (By similarity). Interacts with CRTC2 (probably when phosphorylated at 'Ser-171') (By similarity). Interacts with CRTC3 (probably when phosphorylated at 'Ser-162' and/or 'Ser-273') (By similarity). Interacts with ATP2B1 and ATP2B3; this interaction inhibits calcium-transporting ATPase activity (By similarity). Interacts with MEFV (By similarity). Interacts with RNF115 (By similarity). Interacts with GPR15; this interaction promotes ER-to-Golgi transport of GPR15 (By similarity).</text>
</comment>
<comment type="interaction">
    <interactant intactId="EBI-356462">
        <id>P62260</id>
    </interactant>
    <interactant intactId="EBI-7540603">
        <id>P67828</id>
        <label>CSNK1A1</label>
    </interactant>
    <organismsDiffer>true</organismsDiffer>
    <experiments>2</experiments>
</comment>
<comment type="interaction">
    <interactant intactId="EBI-356462">
        <id>P62260</id>
    </interactant>
    <interactant intactId="EBI-960409">
        <id>Q9UKT5</id>
        <label>FBXO4</label>
    </interactant>
    <organismsDiffer>true</organismsDiffer>
    <experiments>2</experiments>
</comment>
<comment type="subcellular location">
    <subcellularLocation>
        <location evidence="2">Nucleus</location>
    </subcellularLocation>
    <subcellularLocation>
        <location evidence="2">Cytoplasm</location>
    </subcellularLocation>
    <subcellularLocation>
        <location evidence="2">Melanosome</location>
    </subcellularLocation>
</comment>
<comment type="developmental stage">
    <text evidence="8">Present at high levels in the pineal gland early in development and decreased steadily thereafter.</text>
</comment>
<comment type="similarity">
    <text evidence="10">Belongs to the 14-3-3 family.</text>
</comment>
<gene>
    <name type="primary">Ywhae</name>
</gene>
<protein>
    <recommendedName>
        <fullName>14-3-3 protein epsilon</fullName>
        <shortName>14-3-3E</shortName>
    </recommendedName>
    <alternativeName>
        <fullName>Mitochondrial import stimulation factor L subunit</fullName>
        <shortName>MSF L</shortName>
    </alternativeName>
</protein>
<keyword id="KW-0007">Acetylation</keyword>
<keyword id="KW-0963">Cytoplasm</keyword>
<keyword id="KW-0903">Direct protein sequencing</keyword>
<keyword id="KW-1017">Isopeptide bond</keyword>
<keyword id="KW-0539">Nucleus</keyword>
<keyword id="KW-0597">Phosphoprotein</keyword>
<keyword id="KW-1185">Reference proteome</keyword>
<keyword id="KW-0832">Ubl conjugation</keyword>
<accession>P62260</accession>
<accession>P29360</accession>
<accession>P42655</accession>
<accession>Q63631</accession>
<reference key="1">
    <citation type="journal article" date="1994" name="DNA Cell Biol.">
        <title>Cloning and characterization of the epsilon and zeta isoforms of the 14-3-3 proteins.</title>
        <authorList>
            <person name="Roseboom P.H."/>
            <person name="Weller J.L."/>
            <person name="Babila T."/>
            <person name="Aitken A."/>
            <person name="Sellers L.A."/>
            <person name="Moffet J.R."/>
            <person name="Namboodiri M.A."/>
            <person name="Klein D.C."/>
        </authorList>
    </citation>
    <scope>NUCLEOTIDE SEQUENCE [MRNA]</scope>
    <scope>DEVELOPMENTAL STAGE</scope>
    <source>
        <tissue>Pineal gland</tissue>
    </source>
</reference>
<reference key="2">
    <citation type="journal article" date="1994" name="J. Biochem.">
        <title>cDNA cloning and characterization of mitochondrial import stimulation factor (MSF) purified from rat liver cytosol.</title>
        <authorList>
            <person name="Alam R."/>
            <person name="Hachiya N."/>
            <person name="Sakaguchi M."/>
            <person name="Shun-Ichiro K."/>
            <person name="Iwanaga S."/>
            <person name="Kitajima M."/>
            <person name="Mihara K."/>
            <person name="Omura T."/>
        </authorList>
    </citation>
    <scope>NUCLEOTIDE SEQUENCE [MRNA]</scope>
    <source>
        <tissue>Liver</tissue>
    </source>
</reference>
<reference key="3">
    <citation type="journal article" date="1996" name="Biochem. Biophys. Res. Commun.">
        <title>Association of a 14-3-3 protein with CMP-NeuAc:GM1 alpha 2,3-sialyltransferase.</title>
        <authorList>
            <person name="Gao L."/>
            <person name="Gu X.B."/>
            <person name="Yu D.S."/>
            <person name="Yu R.K."/>
            <person name="Zeng G."/>
        </authorList>
    </citation>
    <scope>NUCLEOTIDE SEQUENCE [MRNA]</scope>
    <source>
        <tissue>Brain</tissue>
    </source>
</reference>
<reference key="4">
    <citation type="journal article" date="2004" name="Genome Res.">
        <title>The status, quality, and expansion of the NIH full-length cDNA project: the Mammalian Gene Collection (MGC).</title>
        <authorList>
            <consortium name="The MGC Project Team"/>
        </authorList>
    </citation>
    <scope>NUCLEOTIDE SEQUENCE [LARGE SCALE MRNA]</scope>
    <source>
        <tissue>Pituitary</tissue>
    </source>
</reference>
<reference key="5">
    <citation type="submission" date="2009-06" db="UniProtKB">
        <authorList>
            <person name="Bienvenut W.V."/>
            <person name="von Kriegsheim A."/>
            <person name="Kolch W."/>
        </authorList>
    </citation>
    <scope>PROTEIN SEQUENCE OF 1-12; 30-42; 95-106; 143-153 AND 216-225</scope>
    <scope>ACETYLATION AT MET-1</scope>
    <scope>IDENTIFICATION BY MASS SPECTROMETRY</scope>
    <source>
        <tissue>Fibroblast</tissue>
    </source>
</reference>
<reference key="6">
    <citation type="submission" date="2007-09" db="UniProtKB">
        <authorList>
            <person name="Lubec G."/>
            <person name="Diao W."/>
            <person name="Afjehi-Sadat L."/>
            <person name="Chen W.-Q."/>
            <person name="Kang S.U."/>
            <person name="Lubec S."/>
        </authorList>
    </citation>
    <scope>PROTEIN SEQUENCE OF 20-50; 62-73; 87-94; 107-123; 131-170 AND 197-225</scope>
    <scope>IDENTIFICATION BY MASS SPECTROMETRY</scope>
    <source>
        <strain>Sprague-Dawley</strain>
        <tissue>Brain</tissue>
        <tissue>Hippocampus</tissue>
        <tissue>Spinal cord</tissue>
    </source>
</reference>
<reference key="7">
    <citation type="journal article" date="2001" name="Proc. Natl. Acad. Sci. U.S.A.">
        <title>Role of a pineal cAMP-operated arylalkylamine N-acetyltransferase/14-3-3-binding switch in melatonin synthesis.</title>
        <authorList>
            <person name="Ganguly S."/>
            <person name="Gastel J.A."/>
            <person name="Weller J.L."/>
            <person name="Schwartz C."/>
            <person name="Jaffe H."/>
            <person name="Namboodiri M.A."/>
            <person name="Coon S.L."/>
            <person name="Hickman A.B."/>
            <person name="Rollag M."/>
            <person name="Obsil T."/>
            <person name="Beauverger P."/>
            <person name="Ferry G."/>
            <person name="Boutin J.A."/>
            <person name="Klein D.C."/>
        </authorList>
    </citation>
    <scope>PROTEIN SEQUENCE OF 131-142 AND 154-170</scope>
    <scope>INTERACTION WITH AANAT</scope>
    <scope>IDENTIFICATION BY MASS SPECTROMETRY</scope>
</reference>
<reference key="8">
    <citation type="journal article" date="2012" name="Biochem. J.">
        <title>RSK phosphorylates SOS1 creating 14-3-3-docking sites and negatively regulating MAPK activation.</title>
        <authorList>
            <person name="Saha M."/>
            <person name="Carriere A."/>
            <person name="Cheerathodi M."/>
            <person name="Zhang X."/>
            <person name="Lavoie G."/>
            <person name="Rush J."/>
            <person name="Roux P.P."/>
            <person name="Ballif B.A."/>
        </authorList>
    </citation>
    <scope>INTERACTION WITH SOS1</scope>
</reference>
<reference key="9">
    <citation type="journal article" date="2012" name="Nat. Commun.">
        <title>Quantitative maps of protein phosphorylation sites across 14 different rat organs and tissues.</title>
        <authorList>
            <person name="Lundby A."/>
            <person name="Secher A."/>
            <person name="Lage K."/>
            <person name="Nordsborg N.B."/>
            <person name="Dmytriyev A."/>
            <person name="Lundby C."/>
            <person name="Olsen J.V."/>
        </authorList>
    </citation>
    <scope>PHOSPHORYLATION [LARGE SCALE ANALYSIS] AT SER-65; TYR-131; THR-137 AND SER-210</scope>
    <scope>IDENTIFICATION BY MASS SPECTROMETRY [LARGE SCALE ANALYSIS]</scope>
</reference>
<dbReference type="EMBL" id="M84416">
    <property type="protein sequence ID" value="AAC37659.1"/>
    <property type="molecule type" value="mRNA"/>
</dbReference>
<dbReference type="EMBL" id="D30739">
    <property type="protein sequence ID" value="BAA06401.1"/>
    <property type="molecule type" value="mRNA"/>
</dbReference>
<dbReference type="EMBL" id="U53882">
    <property type="protein sequence ID" value="AAC52676.1"/>
    <property type="molecule type" value="mRNA"/>
</dbReference>
<dbReference type="EMBL" id="BC063163">
    <property type="protein sequence ID" value="AAH63163.1"/>
    <property type="molecule type" value="mRNA"/>
</dbReference>
<dbReference type="PIR" id="JX0341">
    <property type="entry name" value="JX0341"/>
</dbReference>
<dbReference type="RefSeq" id="NP_113791.2">
    <property type="nucleotide sequence ID" value="NM_031603.2"/>
</dbReference>
<dbReference type="SMR" id="P62260"/>
<dbReference type="BioGRID" id="248364">
    <property type="interactions" value="17"/>
</dbReference>
<dbReference type="CORUM" id="P62260"/>
<dbReference type="DIP" id="DIP-37260N"/>
<dbReference type="FunCoup" id="P62260">
    <property type="interactions" value="4145"/>
</dbReference>
<dbReference type="IntAct" id="P62260">
    <property type="interactions" value="14"/>
</dbReference>
<dbReference type="MINT" id="P62260"/>
<dbReference type="STRING" id="10116.ENSRNOP00000007100"/>
<dbReference type="CarbonylDB" id="P62260"/>
<dbReference type="GlyGen" id="P62260">
    <property type="glycosylation" value="1 site, 1 O-linked glycan (1 site)"/>
</dbReference>
<dbReference type="iPTMnet" id="P62260"/>
<dbReference type="PhosphoSitePlus" id="P62260"/>
<dbReference type="jPOST" id="P62260"/>
<dbReference type="PaxDb" id="10116-ENSRNOP00000007100"/>
<dbReference type="Ensembl" id="ENSRNOT00000007100.6">
    <property type="protein sequence ID" value="ENSRNOP00000007100.3"/>
    <property type="gene ID" value="ENSRNOG00000005290.6"/>
</dbReference>
<dbReference type="GeneID" id="29753"/>
<dbReference type="KEGG" id="rno:29753"/>
<dbReference type="AGR" id="RGD:62000"/>
<dbReference type="CTD" id="7531"/>
<dbReference type="RGD" id="62000">
    <property type="gene designation" value="Ywhae"/>
</dbReference>
<dbReference type="eggNOG" id="KOG0841">
    <property type="taxonomic scope" value="Eukaryota"/>
</dbReference>
<dbReference type="GeneTree" id="ENSGT01110000267238"/>
<dbReference type="HOGENOM" id="CLU_058290_0_0_1"/>
<dbReference type="InParanoid" id="P62260"/>
<dbReference type="PhylomeDB" id="P62260"/>
<dbReference type="TreeFam" id="TF102003"/>
<dbReference type="Reactome" id="R-RNO-111447">
    <property type="pathway name" value="Activation of BAD and translocation to mitochondria"/>
</dbReference>
<dbReference type="Reactome" id="R-RNO-2028269">
    <property type="pathway name" value="Signaling by Hippo"/>
</dbReference>
<dbReference type="Reactome" id="R-RNO-205025">
    <property type="pathway name" value="NADE modulates death signalling"/>
</dbReference>
<dbReference type="Reactome" id="R-RNO-2565942">
    <property type="pathway name" value="Regulation of PLK1 Activity at G2/M Transition"/>
</dbReference>
<dbReference type="Reactome" id="R-RNO-3371453">
    <property type="pathway name" value="Regulation of HSF1-mediated heat shock response"/>
</dbReference>
<dbReference type="Reactome" id="R-RNO-3371511">
    <property type="pathway name" value="HSF1 activation"/>
</dbReference>
<dbReference type="Reactome" id="R-RNO-380259">
    <property type="pathway name" value="Loss of Nlp from mitotic centrosomes"/>
</dbReference>
<dbReference type="Reactome" id="R-RNO-380270">
    <property type="pathway name" value="Recruitment of mitotic centrosome proteins and complexes"/>
</dbReference>
<dbReference type="Reactome" id="R-RNO-380284">
    <property type="pathway name" value="Loss of proteins required for interphase microtubule organization from the centrosome"/>
</dbReference>
<dbReference type="Reactome" id="R-RNO-380320">
    <property type="pathway name" value="Recruitment of NuMA to mitotic centrosomes"/>
</dbReference>
<dbReference type="Reactome" id="R-RNO-5620912">
    <property type="pathway name" value="Anchoring of the basal body to the plasma membrane"/>
</dbReference>
<dbReference type="Reactome" id="R-RNO-5625740">
    <property type="pathway name" value="RHO GTPases activate PKNs"/>
</dbReference>
<dbReference type="Reactome" id="R-RNO-5628897">
    <property type="pathway name" value="TP53 Regulates Metabolic Genes"/>
</dbReference>
<dbReference type="Reactome" id="R-RNO-75035">
    <property type="pathway name" value="Chk1/Chk2(Cds1) mediated inactivation of Cyclin B:Cdk1 complex"/>
</dbReference>
<dbReference type="Reactome" id="R-RNO-8854518">
    <property type="pathway name" value="AURKA Activation by TPX2"/>
</dbReference>
<dbReference type="Reactome" id="R-RNO-8876198">
    <property type="pathway name" value="RAB GEFs exchange GTP for GDP on RABs"/>
</dbReference>
<dbReference type="PRO" id="PR:P62260"/>
<dbReference type="Proteomes" id="UP000002494">
    <property type="component" value="Chromosome 10"/>
</dbReference>
<dbReference type="Bgee" id="ENSRNOG00000005290">
    <property type="expression patterns" value="Expressed in Ammon's horn and 20 other cell types or tissues"/>
</dbReference>
<dbReference type="GO" id="GO:0030424">
    <property type="term" value="C:axon"/>
    <property type="evidence" value="ECO:0000314"/>
    <property type="project" value="RGD"/>
</dbReference>
<dbReference type="GO" id="GO:0090724">
    <property type="term" value="C:central region of growth cone"/>
    <property type="evidence" value="ECO:0000314"/>
    <property type="project" value="RGD"/>
</dbReference>
<dbReference type="GO" id="GO:0005737">
    <property type="term" value="C:cytoplasm"/>
    <property type="evidence" value="ECO:0000250"/>
    <property type="project" value="UniProtKB"/>
</dbReference>
<dbReference type="GO" id="GO:0005829">
    <property type="term" value="C:cytosol"/>
    <property type="evidence" value="ECO:0000266"/>
    <property type="project" value="RGD"/>
</dbReference>
<dbReference type="GO" id="GO:0005783">
    <property type="term" value="C:endoplasmic reticulum"/>
    <property type="evidence" value="ECO:0000266"/>
    <property type="project" value="RGD"/>
</dbReference>
<dbReference type="GO" id="GO:0098978">
    <property type="term" value="C:glutamatergic synapse"/>
    <property type="evidence" value="ECO:0000314"/>
    <property type="project" value="SynGO"/>
</dbReference>
<dbReference type="GO" id="GO:0005871">
    <property type="term" value="C:kinesin complex"/>
    <property type="evidence" value="ECO:0000314"/>
    <property type="project" value="RGD"/>
</dbReference>
<dbReference type="GO" id="GO:0042470">
    <property type="term" value="C:melanosome"/>
    <property type="evidence" value="ECO:0007669"/>
    <property type="project" value="UniProtKB-SubCell"/>
</dbReference>
<dbReference type="GO" id="GO:0005634">
    <property type="term" value="C:nucleus"/>
    <property type="evidence" value="ECO:0000250"/>
    <property type="project" value="UniProtKB"/>
</dbReference>
<dbReference type="GO" id="GO:0005886">
    <property type="term" value="C:plasma membrane"/>
    <property type="evidence" value="ECO:0000266"/>
    <property type="project" value="RGD"/>
</dbReference>
<dbReference type="GO" id="GO:0045202">
    <property type="term" value="C:synapse"/>
    <property type="evidence" value="ECO:0000314"/>
    <property type="project" value="SynGO"/>
</dbReference>
<dbReference type="GO" id="GO:0019855">
    <property type="term" value="F:calcium channel inhibitor activity"/>
    <property type="evidence" value="ECO:0000266"/>
    <property type="project" value="RGD"/>
</dbReference>
<dbReference type="GO" id="GO:0005246">
    <property type="term" value="F:calcium channel regulator activity"/>
    <property type="evidence" value="ECO:0000266"/>
    <property type="project" value="RGD"/>
</dbReference>
<dbReference type="GO" id="GO:0019899">
    <property type="term" value="F:enzyme binding"/>
    <property type="evidence" value="ECO:0000353"/>
    <property type="project" value="RGD"/>
</dbReference>
<dbReference type="GO" id="GO:0042826">
    <property type="term" value="F:histone deacetylase binding"/>
    <property type="evidence" value="ECO:0000266"/>
    <property type="project" value="RGD"/>
</dbReference>
<dbReference type="GO" id="GO:0042802">
    <property type="term" value="F:identical protein binding"/>
    <property type="evidence" value="ECO:0000266"/>
    <property type="project" value="RGD"/>
</dbReference>
<dbReference type="GO" id="GO:0051219">
    <property type="term" value="F:phosphoprotein binding"/>
    <property type="evidence" value="ECO:0000266"/>
    <property type="project" value="RGD"/>
</dbReference>
<dbReference type="GO" id="GO:0050815">
    <property type="term" value="F:phosphoserine residue binding"/>
    <property type="evidence" value="ECO:0000266"/>
    <property type="project" value="RGD"/>
</dbReference>
<dbReference type="GO" id="GO:0015459">
    <property type="term" value="F:potassium channel regulator activity"/>
    <property type="evidence" value="ECO:0000266"/>
    <property type="project" value="RGD"/>
</dbReference>
<dbReference type="GO" id="GO:0019904">
    <property type="term" value="F:protein domain specific binding"/>
    <property type="evidence" value="ECO:0000266"/>
    <property type="project" value="RGD"/>
</dbReference>
<dbReference type="GO" id="GO:0046982">
    <property type="term" value="F:protein heterodimerization activity"/>
    <property type="evidence" value="ECO:0000266"/>
    <property type="project" value="RGD"/>
</dbReference>
<dbReference type="GO" id="GO:0008426">
    <property type="term" value="F:protein kinase C inhibitor activity"/>
    <property type="evidence" value="ECO:0000304"/>
    <property type="project" value="RGD"/>
</dbReference>
<dbReference type="GO" id="GO:0019903">
    <property type="term" value="F:protein phosphatase binding"/>
    <property type="evidence" value="ECO:0000266"/>
    <property type="project" value="RGD"/>
</dbReference>
<dbReference type="GO" id="GO:0004864">
    <property type="term" value="F:protein phosphatase inhibitor activity"/>
    <property type="evidence" value="ECO:0000266"/>
    <property type="project" value="RGD"/>
</dbReference>
<dbReference type="GO" id="GO:0140311">
    <property type="term" value="F:protein sequestering activity"/>
    <property type="evidence" value="ECO:0000266"/>
    <property type="project" value="RGD"/>
</dbReference>
<dbReference type="GO" id="GO:0044877">
    <property type="term" value="F:protein-containing complex binding"/>
    <property type="evidence" value="ECO:0000353"/>
    <property type="project" value="RGD"/>
</dbReference>
<dbReference type="GO" id="GO:0097110">
    <property type="term" value="F:scaffold protein binding"/>
    <property type="evidence" value="ECO:0000266"/>
    <property type="project" value="RGD"/>
</dbReference>
<dbReference type="GO" id="GO:0035591">
    <property type="term" value="F:signaling adaptor activity"/>
    <property type="evidence" value="ECO:0000266"/>
    <property type="project" value="RGD"/>
</dbReference>
<dbReference type="GO" id="GO:0044325">
    <property type="term" value="F:transmembrane transporter binding"/>
    <property type="evidence" value="ECO:0000266"/>
    <property type="project" value="RGD"/>
</dbReference>
<dbReference type="GO" id="GO:0031625">
    <property type="term" value="F:ubiquitin protein ligase binding"/>
    <property type="evidence" value="ECO:0000266"/>
    <property type="project" value="RGD"/>
</dbReference>
<dbReference type="GO" id="GO:0034605">
    <property type="term" value="P:cellular response to heat"/>
    <property type="evidence" value="ECO:0000250"/>
    <property type="project" value="UniProtKB"/>
</dbReference>
<dbReference type="GO" id="GO:0021987">
    <property type="term" value="P:cerebral cortex development"/>
    <property type="evidence" value="ECO:0000266"/>
    <property type="project" value="RGD"/>
</dbReference>
<dbReference type="GO" id="GO:0002753">
    <property type="term" value="P:cytoplasmic pattern recognition receptor signaling pathway"/>
    <property type="evidence" value="ECO:0000266"/>
    <property type="project" value="RGD"/>
</dbReference>
<dbReference type="GO" id="GO:0021766">
    <property type="term" value="P:hippocampus development"/>
    <property type="evidence" value="ECO:0000266"/>
    <property type="project" value="RGD"/>
</dbReference>
<dbReference type="GO" id="GO:0030007">
    <property type="term" value="P:intracellular potassium ion homeostasis"/>
    <property type="evidence" value="ECO:0000266"/>
    <property type="project" value="RGD"/>
</dbReference>
<dbReference type="GO" id="GO:0000165">
    <property type="term" value="P:MAPK cascade"/>
    <property type="evidence" value="ECO:0000250"/>
    <property type="project" value="UniProtKB"/>
</dbReference>
<dbReference type="GO" id="GO:1905913">
    <property type="term" value="P:negative regulation of calcium ion export across plasma membrane"/>
    <property type="evidence" value="ECO:0000266"/>
    <property type="project" value="RGD"/>
</dbReference>
<dbReference type="GO" id="GO:0034122">
    <property type="term" value="P:negative regulation of toll-like receptor signaling pathway"/>
    <property type="evidence" value="ECO:0000266"/>
    <property type="project" value="RGD"/>
</dbReference>
<dbReference type="GO" id="GO:0001764">
    <property type="term" value="P:neuron migration"/>
    <property type="evidence" value="ECO:0000266"/>
    <property type="project" value="RGD"/>
</dbReference>
<dbReference type="GO" id="GO:0035332">
    <property type="term" value="P:positive regulation of hippo signaling"/>
    <property type="evidence" value="ECO:0000266"/>
    <property type="project" value="RGD"/>
</dbReference>
<dbReference type="GO" id="GO:0046827">
    <property type="term" value="P:positive regulation of protein export from nucleus"/>
    <property type="evidence" value="ECO:0000250"/>
    <property type="project" value="UniProtKB"/>
</dbReference>
<dbReference type="GO" id="GO:0008104">
    <property type="term" value="P:protein localization"/>
    <property type="evidence" value="ECO:0000318"/>
    <property type="project" value="GO_Central"/>
</dbReference>
<dbReference type="GO" id="GO:0070972">
    <property type="term" value="P:protein localization to endoplasmic reticulum"/>
    <property type="evidence" value="ECO:0000266"/>
    <property type="project" value="RGD"/>
</dbReference>
<dbReference type="GO" id="GO:0034504">
    <property type="term" value="P:protein localization to nucleus"/>
    <property type="evidence" value="ECO:0000250"/>
    <property type="project" value="UniProtKB"/>
</dbReference>
<dbReference type="GO" id="GO:0006605">
    <property type="term" value="P:protein targeting"/>
    <property type="evidence" value="ECO:0000266"/>
    <property type="project" value="RGD"/>
</dbReference>
<dbReference type="GO" id="GO:0051480">
    <property type="term" value="P:regulation of cytosolic calcium ion concentration"/>
    <property type="evidence" value="ECO:0000266"/>
    <property type="project" value="RGD"/>
</dbReference>
<dbReference type="GO" id="GO:0060306">
    <property type="term" value="P:regulation of membrane repolarization"/>
    <property type="evidence" value="ECO:0000266"/>
    <property type="project" value="RGD"/>
</dbReference>
<dbReference type="GO" id="GO:0007346">
    <property type="term" value="P:regulation of mitotic cell cycle"/>
    <property type="evidence" value="ECO:0000318"/>
    <property type="project" value="GO_Central"/>
</dbReference>
<dbReference type="GO" id="GO:0099072">
    <property type="term" value="P:regulation of postsynaptic membrane neurotransmitter receptor levels"/>
    <property type="evidence" value="ECO:0000314"/>
    <property type="project" value="SynGO"/>
</dbReference>
<dbReference type="GO" id="GO:1901379">
    <property type="term" value="P:regulation of potassium ion transmembrane transport"/>
    <property type="evidence" value="ECO:0000266"/>
    <property type="project" value="RGD"/>
</dbReference>
<dbReference type="GO" id="GO:0007165">
    <property type="term" value="P:signal transduction"/>
    <property type="evidence" value="ECO:0000318"/>
    <property type="project" value="GO_Central"/>
</dbReference>
<dbReference type="CDD" id="cd10020">
    <property type="entry name" value="14-3-3_epsilon"/>
    <property type="match status" value="1"/>
</dbReference>
<dbReference type="FunFam" id="1.20.190.20:FF:000002">
    <property type="entry name" value="14-3-3 protein epsilon"/>
    <property type="match status" value="1"/>
</dbReference>
<dbReference type="Gene3D" id="1.20.190.20">
    <property type="entry name" value="14-3-3 domain"/>
    <property type="match status" value="1"/>
</dbReference>
<dbReference type="InterPro" id="IPR000308">
    <property type="entry name" value="14-3-3"/>
</dbReference>
<dbReference type="InterPro" id="IPR023409">
    <property type="entry name" value="14-3-3_CS"/>
</dbReference>
<dbReference type="InterPro" id="IPR036815">
    <property type="entry name" value="14-3-3_dom_sf"/>
</dbReference>
<dbReference type="InterPro" id="IPR023410">
    <property type="entry name" value="14-3-3_domain"/>
</dbReference>
<dbReference type="PANTHER" id="PTHR18860">
    <property type="entry name" value="14-3-3 PROTEIN"/>
    <property type="match status" value="1"/>
</dbReference>
<dbReference type="Pfam" id="PF00244">
    <property type="entry name" value="14-3-3"/>
    <property type="match status" value="1"/>
</dbReference>
<dbReference type="PIRSF" id="PIRSF000868">
    <property type="entry name" value="14-3-3"/>
    <property type="match status" value="1"/>
</dbReference>
<dbReference type="PRINTS" id="PR00305">
    <property type="entry name" value="1433ZETA"/>
</dbReference>
<dbReference type="SMART" id="SM00101">
    <property type="entry name" value="14_3_3"/>
    <property type="match status" value="1"/>
</dbReference>
<dbReference type="SUPFAM" id="SSF48445">
    <property type="entry name" value="14-3-3 protein"/>
    <property type="match status" value="1"/>
</dbReference>
<dbReference type="PROSITE" id="PS00796">
    <property type="entry name" value="1433_1"/>
    <property type="match status" value="1"/>
</dbReference>
<dbReference type="PROSITE" id="PS00797">
    <property type="entry name" value="1433_2"/>
    <property type="match status" value="1"/>
</dbReference>
<evidence type="ECO:0000250" key="1"/>
<evidence type="ECO:0000250" key="2">
    <source>
        <dbReference type="UniProtKB" id="P62258"/>
    </source>
</evidence>
<evidence type="ECO:0000250" key="3">
    <source>
        <dbReference type="UniProtKB" id="P62259"/>
    </source>
</evidence>
<evidence type="ECO:0000250" key="4">
    <source>
        <dbReference type="UniProtKB" id="P62261"/>
    </source>
</evidence>
<evidence type="ECO:0000256" key="5">
    <source>
        <dbReference type="SAM" id="MobiDB-lite"/>
    </source>
</evidence>
<evidence type="ECO:0000269" key="6">
    <source>
    </source>
</evidence>
<evidence type="ECO:0000269" key="7">
    <source>
    </source>
</evidence>
<evidence type="ECO:0000269" key="8">
    <source>
    </source>
</evidence>
<evidence type="ECO:0000269" key="9">
    <source ref="5"/>
</evidence>
<evidence type="ECO:0000305" key="10"/>
<evidence type="ECO:0007744" key="11">
    <source>
    </source>
</evidence>
<name>1433E_RAT</name>